<proteinExistence type="evidence at protein level"/>
<organism>
    <name type="scientific">Homo sapiens</name>
    <name type="common">Human</name>
    <dbReference type="NCBI Taxonomy" id="9606"/>
    <lineage>
        <taxon>Eukaryota</taxon>
        <taxon>Metazoa</taxon>
        <taxon>Chordata</taxon>
        <taxon>Craniata</taxon>
        <taxon>Vertebrata</taxon>
        <taxon>Euteleostomi</taxon>
        <taxon>Mammalia</taxon>
        <taxon>Eutheria</taxon>
        <taxon>Euarchontoglires</taxon>
        <taxon>Primates</taxon>
        <taxon>Haplorrhini</taxon>
        <taxon>Catarrhini</taxon>
        <taxon>Hominidae</taxon>
        <taxon>Homo</taxon>
    </lineage>
</organism>
<sequence length="555" mass="61904">MEPVTKWSPKQVVDWTRGLDDCLQQYVHKFEREKINGEQLLQISHQDLEELGVTRIGHQELVLEAVDLLCALNYGLETDNMKNLVLKLRASSHNLQNYISSRRKSPAYDGNTSRKAPNEFLTSVVELIGAAKALLAWLDRAPFTGITDFSVTKNKIIQLCLDLTTTVQKDCFVAEMEDKVLTVVKVLNGICDKTIRSTTDPVMSQCACLEEVHLPNIKPGEGLGMYIKSTYDGLHVITGTTENSPADRSQKIHAGDEVIQVNQQTVVGWQLKNLVKKLRENPTGVVLLLKKRPTGSFNFTPAPLKNLRWKPPLVQTSPPPATTQSPESTMDTSLKKEKSAILDLYIPPPPAVPYSPRDENGSFVYGGSSKCKQPLPGPKGSESPNSFLDQESRRRRFTIADSDQLPGYSVETNILPTKMREKTPSYGKPRPLSMPADGNWMGIVDPFARPRGHGRKGEDALCRYFSNERIPPIIEESSSPPYRFSRPTTERHLVRGADYIRGSRCYINSDLHSSATIPFQEEGTKKKSGSSATKSSSTEPSLLVSWFTRLKLLTH</sequence>
<name>CNKR3_HUMAN</name>
<keyword id="KW-0025">Alternative splicing</keyword>
<keyword id="KW-1003">Cell membrane</keyword>
<keyword id="KW-0963">Cytoplasm</keyword>
<keyword id="KW-0472">Membrane</keyword>
<keyword id="KW-0597">Phosphoprotein</keyword>
<keyword id="KW-1267">Proteomics identification</keyword>
<keyword id="KW-1185">Reference proteome</keyword>
<accession>Q6P9H4</accession>
<accession>C9IZX4</accession>
<accession>Q5SGD5</accession>
<accession>Q96N65</accession>
<dbReference type="EMBL" id="AY328891">
    <property type="protein sequence ID" value="AAQ92306.1"/>
    <property type="molecule type" value="mRNA"/>
</dbReference>
<dbReference type="EMBL" id="AY328892">
    <property type="protein sequence ID" value="AAQ92307.1"/>
    <property type="molecule type" value="mRNA"/>
</dbReference>
<dbReference type="EMBL" id="AY328893">
    <property type="protein sequence ID" value="AAQ92308.1"/>
    <property type="molecule type" value="mRNA"/>
</dbReference>
<dbReference type="EMBL" id="AK055911">
    <property type="protein sequence ID" value="BAB71044.1"/>
    <property type="molecule type" value="mRNA"/>
</dbReference>
<dbReference type="EMBL" id="AL357075">
    <property type="status" value="NOT_ANNOTATED_CDS"/>
    <property type="molecule type" value="Genomic_DNA"/>
</dbReference>
<dbReference type="EMBL" id="AL033376">
    <property type="status" value="NOT_ANNOTATED_CDS"/>
    <property type="molecule type" value="Genomic_DNA"/>
</dbReference>
<dbReference type="EMBL" id="AL590401">
    <property type="status" value="NOT_ANNOTATED_CDS"/>
    <property type="molecule type" value="Genomic_DNA"/>
</dbReference>
<dbReference type="EMBL" id="CH471051">
    <property type="protein sequence ID" value="EAW47699.1"/>
    <property type="molecule type" value="Genomic_DNA"/>
</dbReference>
<dbReference type="EMBL" id="BC060761">
    <property type="protein sequence ID" value="AAH60761.1"/>
    <property type="molecule type" value="mRNA"/>
</dbReference>
<dbReference type="CCDS" id="CCDS5246.1">
    <molecule id="Q6P9H4-1"/>
</dbReference>
<dbReference type="RefSeq" id="NP_775786.2">
    <molecule id="Q6P9H4-1"/>
    <property type="nucleotide sequence ID" value="NM_173515.4"/>
</dbReference>
<dbReference type="SMR" id="Q6P9H4"/>
<dbReference type="BioGRID" id="127531">
    <property type="interactions" value="48"/>
</dbReference>
<dbReference type="FunCoup" id="Q6P9H4">
    <property type="interactions" value="413"/>
</dbReference>
<dbReference type="IntAct" id="Q6P9H4">
    <property type="interactions" value="44"/>
</dbReference>
<dbReference type="MINT" id="Q6P9H4"/>
<dbReference type="STRING" id="9606.ENSP00000475915"/>
<dbReference type="iPTMnet" id="Q6P9H4"/>
<dbReference type="PhosphoSitePlus" id="Q6P9H4"/>
<dbReference type="BioMuta" id="CNKSR3"/>
<dbReference type="DMDM" id="74758311"/>
<dbReference type="jPOST" id="Q6P9H4"/>
<dbReference type="MassIVE" id="Q6P9H4"/>
<dbReference type="PaxDb" id="9606-ENSP00000475915"/>
<dbReference type="PeptideAtlas" id="Q6P9H4"/>
<dbReference type="ProteomicsDB" id="67049"/>
<dbReference type="ProteomicsDB" id="7862"/>
<dbReference type="Pumba" id="Q6P9H4"/>
<dbReference type="Antibodypedia" id="33402">
    <property type="antibodies" value="184 antibodies from 21 providers"/>
</dbReference>
<dbReference type="DNASU" id="154043"/>
<dbReference type="Ensembl" id="ENST00000607772.6">
    <molecule id="Q6P9H4-1"/>
    <property type="protein sequence ID" value="ENSP00000475915.1"/>
    <property type="gene ID" value="ENSG00000153721.19"/>
</dbReference>
<dbReference type="GeneID" id="154043"/>
<dbReference type="KEGG" id="hsa:154043"/>
<dbReference type="MANE-Select" id="ENST00000607772.6">
    <property type="protein sequence ID" value="ENSP00000475915.1"/>
    <property type="RefSeq nucleotide sequence ID" value="NM_173515.4"/>
    <property type="RefSeq protein sequence ID" value="NP_775786.2"/>
</dbReference>
<dbReference type="UCSC" id="uc003qpy.4">
    <molecule id="Q6P9H4-1"/>
    <property type="organism name" value="human"/>
</dbReference>
<dbReference type="UCSC" id="uc063skq.1">
    <property type="organism name" value="human"/>
</dbReference>
<dbReference type="AGR" id="HGNC:23034"/>
<dbReference type="CTD" id="154043"/>
<dbReference type="DisGeNET" id="154043"/>
<dbReference type="GeneCards" id="CNKSR3"/>
<dbReference type="HGNC" id="HGNC:23034">
    <property type="gene designation" value="CNKSR3"/>
</dbReference>
<dbReference type="HPA" id="ENSG00000153721">
    <property type="expression patterns" value="Low tissue specificity"/>
</dbReference>
<dbReference type="MIM" id="617476">
    <property type="type" value="gene"/>
</dbReference>
<dbReference type="neXtProt" id="NX_Q6P9H4"/>
<dbReference type="OpenTargets" id="ENSG00000153721"/>
<dbReference type="PharmGKB" id="PA134880153"/>
<dbReference type="VEuPathDB" id="HostDB:ENSG00000153721"/>
<dbReference type="eggNOG" id="KOG1738">
    <property type="taxonomic scope" value="Eukaryota"/>
</dbReference>
<dbReference type="GeneTree" id="ENSGT00940000154428"/>
<dbReference type="HOGENOM" id="CLU_037920_0_0_1"/>
<dbReference type="InParanoid" id="Q6P9H4"/>
<dbReference type="OMA" id="VTRWSPK"/>
<dbReference type="OrthoDB" id="74412at2759"/>
<dbReference type="PAN-GO" id="Q6P9H4">
    <property type="GO annotations" value="0 GO annotations based on evolutionary models"/>
</dbReference>
<dbReference type="PhylomeDB" id="Q6P9H4"/>
<dbReference type="TreeFam" id="TF326495"/>
<dbReference type="PathwayCommons" id="Q6P9H4"/>
<dbReference type="SignaLink" id="Q6P9H4"/>
<dbReference type="BioGRID-ORCS" id="154043">
    <property type="hits" value="10 hits in 1157 CRISPR screens"/>
</dbReference>
<dbReference type="ChiTaRS" id="CNKSR3">
    <property type="organism name" value="human"/>
</dbReference>
<dbReference type="GenomeRNAi" id="154043"/>
<dbReference type="Pharos" id="Q6P9H4">
    <property type="development level" value="Tbio"/>
</dbReference>
<dbReference type="PRO" id="PR:Q6P9H4"/>
<dbReference type="Proteomes" id="UP000005640">
    <property type="component" value="Chromosome 6"/>
</dbReference>
<dbReference type="RNAct" id="Q6P9H4">
    <property type="molecule type" value="protein"/>
</dbReference>
<dbReference type="Bgee" id="ENSG00000153721">
    <property type="expression patterns" value="Expressed in esophagus squamous epithelium and 170 other cell types or tissues"/>
</dbReference>
<dbReference type="ExpressionAtlas" id="Q6P9H4">
    <property type="expression patterns" value="baseline and differential"/>
</dbReference>
<dbReference type="GO" id="GO:0016324">
    <property type="term" value="C:apical plasma membrane"/>
    <property type="evidence" value="ECO:0007669"/>
    <property type="project" value="UniProtKB-SubCell"/>
</dbReference>
<dbReference type="GO" id="GO:0005737">
    <property type="term" value="C:cytoplasm"/>
    <property type="evidence" value="ECO:0007669"/>
    <property type="project" value="UniProtKB-SubCell"/>
</dbReference>
<dbReference type="GO" id="GO:0070373">
    <property type="term" value="P:negative regulation of ERK1 and ERK2 cascade"/>
    <property type="evidence" value="ECO:0000250"/>
    <property type="project" value="UniProtKB"/>
</dbReference>
<dbReference type="GO" id="GO:0033137">
    <property type="term" value="P:negative regulation of peptidyl-serine phosphorylation"/>
    <property type="evidence" value="ECO:0000250"/>
    <property type="project" value="UniProtKB"/>
</dbReference>
<dbReference type="GO" id="GO:0010765">
    <property type="term" value="P:positive regulation of sodium ion transport"/>
    <property type="evidence" value="ECO:0000250"/>
    <property type="project" value="UniProtKB"/>
</dbReference>
<dbReference type="CDD" id="cd06748">
    <property type="entry name" value="PDZ_CNK1_2_3-like"/>
    <property type="match status" value="1"/>
</dbReference>
<dbReference type="CDD" id="cd09511">
    <property type="entry name" value="SAM_CNK1_2_3-suppressor"/>
    <property type="match status" value="1"/>
</dbReference>
<dbReference type="FunFam" id="1.10.150.50:FF:000019">
    <property type="entry name" value="Connector enhancer of kinase suppressor of Ras 2"/>
    <property type="match status" value="1"/>
</dbReference>
<dbReference type="FunFam" id="2.30.42.10:FF:000060">
    <property type="entry name" value="Connector enhancer of kinase suppressor of Ras 2"/>
    <property type="match status" value="1"/>
</dbReference>
<dbReference type="Gene3D" id="2.30.42.10">
    <property type="match status" value="1"/>
</dbReference>
<dbReference type="Gene3D" id="1.10.150.50">
    <property type="entry name" value="Transcription Factor, Ets-1"/>
    <property type="match status" value="1"/>
</dbReference>
<dbReference type="InterPro" id="IPR049628">
    <property type="entry name" value="CNK1-3_SAM"/>
</dbReference>
<dbReference type="InterPro" id="IPR010599">
    <property type="entry name" value="CNK2/3_dom"/>
</dbReference>
<dbReference type="InterPro" id="IPR051566">
    <property type="entry name" value="CNKSR"/>
</dbReference>
<dbReference type="InterPro" id="IPR017874">
    <property type="entry name" value="CRIC_domain"/>
</dbReference>
<dbReference type="InterPro" id="IPR001478">
    <property type="entry name" value="PDZ"/>
</dbReference>
<dbReference type="InterPro" id="IPR036034">
    <property type="entry name" value="PDZ_sf"/>
</dbReference>
<dbReference type="InterPro" id="IPR001660">
    <property type="entry name" value="SAM"/>
</dbReference>
<dbReference type="InterPro" id="IPR013761">
    <property type="entry name" value="SAM/pointed_sf"/>
</dbReference>
<dbReference type="PANTHER" id="PTHR12844">
    <property type="entry name" value="CONNECTOR ENCHANCER OF KINASE SUPPRESSOR OF RAS"/>
    <property type="match status" value="1"/>
</dbReference>
<dbReference type="PANTHER" id="PTHR12844:SF17">
    <property type="entry name" value="CONNECTOR ENHANCER OF KINASE SUPPRESSOR OF RAS 3"/>
    <property type="match status" value="1"/>
</dbReference>
<dbReference type="Pfam" id="PF06663">
    <property type="entry name" value="CNK2_3_dom"/>
    <property type="match status" value="1"/>
</dbReference>
<dbReference type="Pfam" id="PF10534">
    <property type="entry name" value="CRIC_ras_sig"/>
    <property type="match status" value="1"/>
</dbReference>
<dbReference type="Pfam" id="PF00595">
    <property type="entry name" value="PDZ"/>
    <property type="match status" value="1"/>
</dbReference>
<dbReference type="Pfam" id="PF00536">
    <property type="entry name" value="SAM_1"/>
    <property type="match status" value="1"/>
</dbReference>
<dbReference type="SMART" id="SM00228">
    <property type="entry name" value="PDZ"/>
    <property type="match status" value="1"/>
</dbReference>
<dbReference type="SMART" id="SM00454">
    <property type="entry name" value="SAM"/>
    <property type="match status" value="1"/>
</dbReference>
<dbReference type="SUPFAM" id="SSF50156">
    <property type="entry name" value="PDZ domain-like"/>
    <property type="match status" value="1"/>
</dbReference>
<dbReference type="SUPFAM" id="SSF47769">
    <property type="entry name" value="SAM/Pointed domain"/>
    <property type="match status" value="1"/>
</dbReference>
<dbReference type="PROSITE" id="PS51290">
    <property type="entry name" value="CRIC"/>
    <property type="match status" value="1"/>
</dbReference>
<dbReference type="PROSITE" id="PS50106">
    <property type="entry name" value="PDZ"/>
    <property type="match status" value="1"/>
</dbReference>
<dbReference type="PROSITE" id="PS50105">
    <property type="entry name" value="SAM_DOMAIN"/>
    <property type="match status" value="1"/>
</dbReference>
<protein>
    <recommendedName>
        <fullName>Connector enhancer of kinase suppressor of ras 3</fullName>
        <shortName>Connector enhancer of KSR 3</shortName>
    </recommendedName>
    <alternativeName>
        <fullName>CNK homolog protein 3</fullName>
        <shortName>CNK3</shortName>
    </alternativeName>
    <alternativeName>
        <fullName>CNKSR family member 3</fullName>
    </alternativeName>
    <alternativeName>
        <fullName>Maguin-like protein</fullName>
    </alternativeName>
</protein>
<feature type="chain" id="PRO_0000311105" description="Connector enhancer of kinase suppressor of ras 3">
    <location>
        <begin position="1"/>
        <end position="555"/>
    </location>
</feature>
<feature type="domain" description="SAM" evidence="3">
    <location>
        <begin position="7"/>
        <end position="72"/>
    </location>
</feature>
<feature type="domain" description="CRIC" evidence="4">
    <location>
        <begin position="80"/>
        <end position="174"/>
    </location>
</feature>
<feature type="domain" description="PDZ" evidence="2">
    <location>
        <begin position="211"/>
        <end position="293"/>
    </location>
</feature>
<feature type="domain" description="DUF1170">
    <location>
        <begin position="325"/>
        <end position="546"/>
    </location>
</feature>
<feature type="region of interest" description="Disordered" evidence="5">
    <location>
        <begin position="309"/>
        <end position="334"/>
    </location>
</feature>
<feature type="region of interest" description="Disordered" evidence="5">
    <location>
        <begin position="347"/>
        <end position="390"/>
    </location>
</feature>
<feature type="region of interest" description="Disordered" evidence="5">
    <location>
        <begin position="517"/>
        <end position="537"/>
    </location>
</feature>
<feature type="modified residue" description="Phosphoserine" evidence="1">
    <location>
        <position position="381"/>
    </location>
</feature>
<feature type="modified residue" description="Phosphoserine" evidence="9">
    <location>
        <position position="383"/>
    </location>
</feature>
<feature type="sequence conflict" description="In Ref. 2; BAB71044." evidence="8" ref="2">
    <original>I</original>
    <variation>T</variation>
    <location>
        <position position="259"/>
    </location>
</feature>
<feature type="sequence conflict" description="In Ref. 1; AAQ92306/AAQ92307/AAQ92308." evidence="8" ref="1">
    <original>L</original>
    <variation>P</variation>
    <location>
        <position position="334"/>
    </location>
</feature>
<gene>
    <name type="primary">CNKSR3</name>
    <name type="synonym">MAGI1</name>
</gene>
<comment type="function">
    <text evidence="7">Involved in transepithelial sodium transport. Regulates aldosterone-induced and epithelial sodium channel (ENaC)-mediated sodium transport through regulation of ENaC cell surface expression. Acts as a scaffold protein coordinating the assembly of an ENaC-regulatory complex (ERC).</text>
</comment>
<comment type="subunit">
    <text evidence="7">Interacts with epithelial sodium channel ENaC. Interacts directly with SCNN1A (ENaC subunit alpha) and SCNN1B (ENaC subunit beta) C-terminal tails. Interacts with ENaC regulatory proteins NEDD4L, RAF1 and SGK1.</text>
</comment>
<comment type="interaction">
    <interactant intactId="EBI-10253274">
        <id>Q6P9H4</id>
    </interactant>
    <interactant intactId="EBI-711280">
        <id>P42772</id>
        <label>CDKN2B</label>
    </interactant>
    <organismsDiffer>false</organismsDiffer>
    <experiments>3</experiments>
</comment>
<comment type="interaction">
    <interactant intactId="EBI-10253274">
        <id>Q6P9H4</id>
    </interactant>
    <interactant intactId="EBI-351257">
        <id>P26196</id>
        <label>DDX6</label>
    </interactant>
    <organismsDiffer>false</organismsDiffer>
    <experiments>3</experiments>
</comment>
<comment type="interaction">
    <interactant intactId="EBI-10253274">
        <id>Q6P9H4</id>
    </interactant>
    <interactant intactId="EBI-299104">
        <id>P38919</id>
        <label>EIF4A3</label>
    </interactant>
    <organismsDiffer>false</organismsDiffer>
    <experiments>3</experiments>
</comment>
<comment type="interaction">
    <interactant intactId="EBI-10253274">
        <id>Q6P9H4</id>
    </interactant>
    <interactant intactId="EBI-11956087">
        <id>Q5HYJ3-3</id>
        <label>FAM76B</label>
    </interactant>
    <organismsDiffer>false</organismsDiffer>
    <experiments>3</experiments>
</comment>
<comment type="interaction">
    <interactant intactId="EBI-10253274">
        <id>Q6P9H4</id>
    </interactant>
    <interactant intactId="EBI-746309">
        <id>Q92917</id>
        <label>GPKOW</label>
    </interactant>
    <organismsDiffer>false</organismsDiffer>
    <experiments>3</experiments>
</comment>
<comment type="interaction">
    <interactant intactId="EBI-10253274">
        <id>Q6P9H4</id>
    </interactant>
    <interactant intactId="EBI-17181882">
        <id>O75564-2</id>
        <label>JRK</label>
    </interactant>
    <organismsDiffer>false</organismsDiffer>
    <experiments>3</experiments>
</comment>
<comment type="interaction">
    <interactant intactId="EBI-10253274">
        <id>Q6P9H4</id>
    </interactant>
    <interactant intactId="EBI-2512055">
        <id>O15049</id>
        <label>N4BP3</label>
    </interactant>
    <organismsDiffer>false</organismsDiffer>
    <experiments>3</experiments>
</comment>
<comment type="interaction">
    <interactant intactId="EBI-10253274">
        <id>Q6P9H4</id>
    </interactant>
    <interactant intactId="EBI-372942">
        <id>Q13287</id>
        <label>NMI</label>
    </interactant>
    <organismsDiffer>false</organismsDiffer>
    <experiments>6</experiments>
</comment>
<comment type="subcellular location">
    <subcellularLocation>
        <location evidence="7">Cytoplasm</location>
    </subcellularLocation>
    <subcellularLocation>
        <location evidence="7">Apical cell membrane</location>
        <topology evidence="7">Peripheral membrane protein</topology>
    </subcellularLocation>
</comment>
<comment type="alternative products">
    <event type="alternative splicing"/>
    <isoform>
        <id>Q6P9H4-1</id>
        <name>CNK3</name>
        <sequence type="displayed"/>
    </isoform>
    <isoform>
        <id>G9CGD6-1</id>
        <name>CNK3-IPCEF1-1</name>
        <name>CNK3/IPCEF1 Long-1</name>
        <sequence type="external"/>
    </isoform>
    <isoform>
        <id>G9CGD6-2</id>
        <name>CNK3-IPCEF1-2</name>
        <name>CNK3/IPCEF1 Long-2</name>
        <sequence type="external"/>
    </isoform>
    <isoform>
        <id>G9CGD6-3</id>
        <name>CNK3-IPCEF1-3</name>
        <name>CNK3/IPCEF1 Short</name>
        <sequence type="external"/>
    </isoform>
</comment>
<comment type="induction">
    <text evidence="6">Up-regulated by aldosterone (at protein level).</text>
</comment>
<comment type="domain">
    <text evidence="7">The PDZ domain is required for interaction with ENaC and SGK1, but not for interaction with NEDDL4 and RAF1.</text>
</comment>
<comment type="similarity">
    <text evidence="8">Belongs to the CNKSR family.</text>
</comment>
<comment type="caution">
    <text evidence="8">The gene name MAGI1, shown in this entry as a synonym, is an obsolete human gene nomenclature committee-approved name. It should be noted that MAGI1 currently is the official name for the unrelated membrane-associated guanylate kinase, WW and PDZ domain-containing protein 1.</text>
</comment>
<reference key="1">
    <citation type="submission" date="2003-06" db="EMBL/GenBank/DDBJ databases">
        <title>Cloning, expression and comparison of human, rat and mouse ML (maguin-like) genes, and expression in mouse oogenesis.</title>
        <authorList>
            <person name="Tzolovsky G.I."/>
            <person name="McGurk L."/>
            <person name="Pathirana S."/>
            <person name="Slee R."/>
            <person name="Hillier S."/>
            <person name="Clinton M."/>
            <person name="Bownes M."/>
        </authorList>
    </citation>
    <scope>NUCLEOTIDE SEQUENCE [MRNA]</scope>
</reference>
<reference key="2">
    <citation type="journal article" date="2004" name="Nat. Genet.">
        <title>Complete sequencing and characterization of 21,243 full-length human cDNAs.</title>
        <authorList>
            <person name="Ota T."/>
            <person name="Suzuki Y."/>
            <person name="Nishikawa T."/>
            <person name="Otsuki T."/>
            <person name="Sugiyama T."/>
            <person name="Irie R."/>
            <person name="Wakamatsu A."/>
            <person name="Hayashi K."/>
            <person name="Sato H."/>
            <person name="Nagai K."/>
            <person name="Kimura K."/>
            <person name="Makita H."/>
            <person name="Sekine M."/>
            <person name="Obayashi M."/>
            <person name="Nishi T."/>
            <person name="Shibahara T."/>
            <person name="Tanaka T."/>
            <person name="Ishii S."/>
            <person name="Yamamoto J."/>
            <person name="Saito K."/>
            <person name="Kawai Y."/>
            <person name="Isono Y."/>
            <person name="Nakamura Y."/>
            <person name="Nagahari K."/>
            <person name="Murakami K."/>
            <person name="Yasuda T."/>
            <person name="Iwayanagi T."/>
            <person name="Wagatsuma M."/>
            <person name="Shiratori A."/>
            <person name="Sudo H."/>
            <person name="Hosoiri T."/>
            <person name="Kaku Y."/>
            <person name="Kodaira H."/>
            <person name="Kondo H."/>
            <person name="Sugawara M."/>
            <person name="Takahashi M."/>
            <person name="Kanda K."/>
            <person name="Yokoi T."/>
            <person name="Furuya T."/>
            <person name="Kikkawa E."/>
            <person name="Omura Y."/>
            <person name="Abe K."/>
            <person name="Kamihara K."/>
            <person name="Katsuta N."/>
            <person name="Sato K."/>
            <person name="Tanikawa M."/>
            <person name="Yamazaki M."/>
            <person name="Ninomiya K."/>
            <person name="Ishibashi T."/>
            <person name="Yamashita H."/>
            <person name="Murakawa K."/>
            <person name="Fujimori K."/>
            <person name="Tanai H."/>
            <person name="Kimata M."/>
            <person name="Watanabe M."/>
            <person name="Hiraoka S."/>
            <person name="Chiba Y."/>
            <person name="Ishida S."/>
            <person name="Ono Y."/>
            <person name="Takiguchi S."/>
            <person name="Watanabe S."/>
            <person name="Yosida M."/>
            <person name="Hotuta T."/>
            <person name="Kusano J."/>
            <person name="Kanehori K."/>
            <person name="Takahashi-Fujii A."/>
            <person name="Hara H."/>
            <person name="Tanase T.-O."/>
            <person name="Nomura Y."/>
            <person name="Togiya S."/>
            <person name="Komai F."/>
            <person name="Hara R."/>
            <person name="Takeuchi K."/>
            <person name="Arita M."/>
            <person name="Imose N."/>
            <person name="Musashino K."/>
            <person name="Yuuki H."/>
            <person name="Oshima A."/>
            <person name="Sasaki N."/>
            <person name="Aotsuka S."/>
            <person name="Yoshikawa Y."/>
            <person name="Matsunawa H."/>
            <person name="Ichihara T."/>
            <person name="Shiohata N."/>
            <person name="Sano S."/>
            <person name="Moriya S."/>
            <person name="Momiyama H."/>
            <person name="Satoh N."/>
            <person name="Takami S."/>
            <person name="Terashima Y."/>
            <person name="Suzuki O."/>
            <person name="Nakagawa S."/>
            <person name="Senoh A."/>
            <person name="Mizoguchi H."/>
            <person name="Goto Y."/>
            <person name="Shimizu F."/>
            <person name="Wakebe H."/>
            <person name="Hishigaki H."/>
            <person name="Watanabe T."/>
            <person name="Sugiyama A."/>
            <person name="Takemoto M."/>
            <person name="Kawakami B."/>
            <person name="Yamazaki M."/>
            <person name="Watanabe K."/>
            <person name="Kumagai A."/>
            <person name="Itakura S."/>
            <person name="Fukuzumi Y."/>
            <person name="Fujimori Y."/>
            <person name="Komiyama M."/>
            <person name="Tashiro H."/>
            <person name="Tanigami A."/>
            <person name="Fujiwara T."/>
            <person name="Ono T."/>
            <person name="Yamada K."/>
            <person name="Fujii Y."/>
            <person name="Ozaki K."/>
            <person name="Hirao M."/>
            <person name="Ohmori Y."/>
            <person name="Kawabata A."/>
            <person name="Hikiji T."/>
            <person name="Kobatake N."/>
            <person name="Inagaki H."/>
            <person name="Ikema Y."/>
            <person name="Okamoto S."/>
            <person name="Okitani R."/>
            <person name="Kawakami T."/>
            <person name="Noguchi S."/>
            <person name="Itoh T."/>
            <person name="Shigeta K."/>
            <person name="Senba T."/>
            <person name="Matsumura K."/>
            <person name="Nakajima Y."/>
            <person name="Mizuno T."/>
            <person name="Morinaga M."/>
            <person name="Sasaki M."/>
            <person name="Togashi T."/>
            <person name="Oyama M."/>
            <person name="Hata H."/>
            <person name="Watanabe M."/>
            <person name="Komatsu T."/>
            <person name="Mizushima-Sugano J."/>
            <person name="Satoh T."/>
            <person name="Shirai Y."/>
            <person name="Takahashi Y."/>
            <person name="Nakagawa K."/>
            <person name="Okumura K."/>
            <person name="Nagase T."/>
            <person name="Nomura N."/>
            <person name="Kikuchi H."/>
            <person name="Masuho Y."/>
            <person name="Yamashita R."/>
            <person name="Nakai K."/>
            <person name="Yada T."/>
            <person name="Nakamura Y."/>
            <person name="Ohara O."/>
            <person name="Isogai T."/>
            <person name="Sugano S."/>
        </authorList>
    </citation>
    <scope>NUCLEOTIDE SEQUENCE [LARGE SCALE MRNA]</scope>
</reference>
<reference key="3">
    <citation type="journal article" date="2003" name="Nature">
        <title>The DNA sequence and analysis of human chromosome 6.</title>
        <authorList>
            <person name="Mungall A.J."/>
            <person name="Palmer S.A."/>
            <person name="Sims S.K."/>
            <person name="Edwards C.A."/>
            <person name="Ashurst J.L."/>
            <person name="Wilming L."/>
            <person name="Jones M.C."/>
            <person name="Horton R."/>
            <person name="Hunt S.E."/>
            <person name="Scott C.E."/>
            <person name="Gilbert J.G.R."/>
            <person name="Clamp M.E."/>
            <person name="Bethel G."/>
            <person name="Milne S."/>
            <person name="Ainscough R."/>
            <person name="Almeida J.P."/>
            <person name="Ambrose K.D."/>
            <person name="Andrews T.D."/>
            <person name="Ashwell R.I.S."/>
            <person name="Babbage A.K."/>
            <person name="Bagguley C.L."/>
            <person name="Bailey J."/>
            <person name="Banerjee R."/>
            <person name="Barker D.J."/>
            <person name="Barlow K.F."/>
            <person name="Bates K."/>
            <person name="Beare D.M."/>
            <person name="Beasley H."/>
            <person name="Beasley O."/>
            <person name="Bird C.P."/>
            <person name="Blakey S.E."/>
            <person name="Bray-Allen S."/>
            <person name="Brook J."/>
            <person name="Brown A.J."/>
            <person name="Brown J.Y."/>
            <person name="Burford D.C."/>
            <person name="Burrill W."/>
            <person name="Burton J."/>
            <person name="Carder C."/>
            <person name="Carter N.P."/>
            <person name="Chapman J.C."/>
            <person name="Clark S.Y."/>
            <person name="Clark G."/>
            <person name="Clee C.M."/>
            <person name="Clegg S."/>
            <person name="Cobley V."/>
            <person name="Collier R.E."/>
            <person name="Collins J.E."/>
            <person name="Colman L.K."/>
            <person name="Corby N.R."/>
            <person name="Coville G.J."/>
            <person name="Culley K.M."/>
            <person name="Dhami P."/>
            <person name="Davies J."/>
            <person name="Dunn M."/>
            <person name="Earthrowl M.E."/>
            <person name="Ellington A.E."/>
            <person name="Evans K.A."/>
            <person name="Faulkner L."/>
            <person name="Francis M.D."/>
            <person name="Frankish A."/>
            <person name="Frankland J."/>
            <person name="French L."/>
            <person name="Garner P."/>
            <person name="Garnett J."/>
            <person name="Ghori M.J."/>
            <person name="Gilby L.M."/>
            <person name="Gillson C.J."/>
            <person name="Glithero R.J."/>
            <person name="Grafham D.V."/>
            <person name="Grant M."/>
            <person name="Gribble S."/>
            <person name="Griffiths C."/>
            <person name="Griffiths M.N.D."/>
            <person name="Hall R."/>
            <person name="Halls K.S."/>
            <person name="Hammond S."/>
            <person name="Harley J.L."/>
            <person name="Hart E.A."/>
            <person name="Heath P.D."/>
            <person name="Heathcott R."/>
            <person name="Holmes S.J."/>
            <person name="Howden P.J."/>
            <person name="Howe K.L."/>
            <person name="Howell G.R."/>
            <person name="Huckle E."/>
            <person name="Humphray S.J."/>
            <person name="Humphries M.D."/>
            <person name="Hunt A.R."/>
            <person name="Johnson C.M."/>
            <person name="Joy A.A."/>
            <person name="Kay M."/>
            <person name="Keenan S.J."/>
            <person name="Kimberley A.M."/>
            <person name="King A."/>
            <person name="Laird G.K."/>
            <person name="Langford C."/>
            <person name="Lawlor S."/>
            <person name="Leongamornlert D.A."/>
            <person name="Leversha M."/>
            <person name="Lloyd C.R."/>
            <person name="Lloyd D.M."/>
            <person name="Loveland J.E."/>
            <person name="Lovell J."/>
            <person name="Martin S."/>
            <person name="Mashreghi-Mohammadi M."/>
            <person name="Maslen G.L."/>
            <person name="Matthews L."/>
            <person name="McCann O.T."/>
            <person name="McLaren S.J."/>
            <person name="McLay K."/>
            <person name="McMurray A."/>
            <person name="Moore M.J.F."/>
            <person name="Mullikin J.C."/>
            <person name="Niblett D."/>
            <person name="Nickerson T."/>
            <person name="Novik K.L."/>
            <person name="Oliver K."/>
            <person name="Overton-Larty E.K."/>
            <person name="Parker A."/>
            <person name="Patel R."/>
            <person name="Pearce A.V."/>
            <person name="Peck A.I."/>
            <person name="Phillimore B.J.C.T."/>
            <person name="Phillips S."/>
            <person name="Plumb R.W."/>
            <person name="Porter K.M."/>
            <person name="Ramsey Y."/>
            <person name="Ranby S.A."/>
            <person name="Rice C.M."/>
            <person name="Ross M.T."/>
            <person name="Searle S.M."/>
            <person name="Sehra H.K."/>
            <person name="Sheridan E."/>
            <person name="Skuce C.D."/>
            <person name="Smith S."/>
            <person name="Smith M."/>
            <person name="Spraggon L."/>
            <person name="Squares S.L."/>
            <person name="Steward C.A."/>
            <person name="Sycamore N."/>
            <person name="Tamlyn-Hall G."/>
            <person name="Tester J."/>
            <person name="Theaker A.J."/>
            <person name="Thomas D.W."/>
            <person name="Thorpe A."/>
            <person name="Tracey A."/>
            <person name="Tromans A."/>
            <person name="Tubby B."/>
            <person name="Wall M."/>
            <person name="Wallis J.M."/>
            <person name="West A.P."/>
            <person name="White S.S."/>
            <person name="Whitehead S.L."/>
            <person name="Whittaker H."/>
            <person name="Wild A."/>
            <person name="Willey D.J."/>
            <person name="Wilmer T.E."/>
            <person name="Wood J.M."/>
            <person name="Wray P.W."/>
            <person name="Wyatt J.C."/>
            <person name="Young L."/>
            <person name="Younger R.M."/>
            <person name="Bentley D.R."/>
            <person name="Coulson A."/>
            <person name="Durbin R.M."/>
            <person name="Hubbard T."/>
            <person name="Sulston J.E."/>
            <person name="Dunham I."/>
            <person name="Rogers J."/>
            <person name="Beck S."/>
        </authorList>
    </citation>
    <scope>NUCLEOTIDE SEQUENCE [LARGE SCALE GENOMIC DNA]</scope>
</reference>
<reference key="4">
    <citation type="submission" date="2005-09" db="EMBL/GenBank/DDBJ databases">
        <authorList>
            <person name="Mural R.J."/>
            <person name="Istrail S."/>
            <person name="Sutton G.G."/>
            <person name="Florea L."/>
            <person name="Halpern A.L."/>
            <person name="Mobarry C.M."/>
            <person name="Lippert R."/>
            <person name="Walenz B."/>
            <person name="Shatkay H."/>
            <person name="Dew I."/>
            <person name="Miller J.R."/>
            <person name="Flanigan M.J."/>
            <person name="Edwards N.J."/>
            <person name="Bolanos R."/>
            <person name="Fasulo D."/>
            <person name="Halldorsson B.V."/>
            <person name="Hannenhalli S."/>
            <person name="Turner R."/>
            <person name="Yooseph S."/>
            <person name="Lu F."/>
            <person name="Nusskern D.R."/>
            <person name="Shue B.C."/>
            <person name="Zheng X.H."/>
            <person name="Zhong F."/>
            <person name="Delcher A.L."/>
            <person name="Huson D.H."/>
            <person name="Kravitz S.A."/>
            <person name="Mouchard L."/>
            <person name="Reinert K."/>
            <person name="Remington K.A."/>
            <person name="Clark A.G."/>
            <person name="Waterman M.S."/>
            <person name="Eichler E.E."/>
            <person name="Adams M.D."/>
            <person name="Hunkapiller M.W."/>
            <person name="Myers E.W."/>
            <person name="Venter J.C."/>
        </authorList>
    </citation>
    <scope>NUCLEOTIDE SEQUENCE [LARGE SCALE GENOMIC DNA]</scope>
</reference>
<reference key="5">
    <citation type="journal article" date="2004" name="Genome Res.">
        <title>The status, quality, and expansion of the NIH full-length cDNA project: the Mammalian Gene Collection (MGC).</title>
        <authorList>
            <consortium name="The MGC Project Team"/>
        </authorList>
    </citation>
    <scope>NUCLEOTIDE SEQUENCE [LARGE SCALE MRNA]</scope>
    <source>
        <tissue>Brain</tissue>
    </source>
</reference>
<reference key="6">
    <citation type="journal article" date="2009" name="Anal. Chem.">
        <title>Lys-N and trypsin cover complementary parts of the phosphoproteome in a refined SCX-based approach.</title>
        <authorList>
            <person name="Gauci S."/>
            <person name="Helbig A.O."/>
            <person name="Slijper M."/>
            <person name="Krijgsveld J."/>
            <person name="Heck A.J."/>
            <person name="Mohammed S."/>
        </authorList>
    </citation>
    <scope>IDENTIFICATION BY MASS SPECTROMETRY [LARGE SCALE ANALYSIS]</scope>
</reference>
<reference key="7">
    <citation type="journal article" date="2009" name="FASEB J.">
        <title>Cnksr3 is a direct mineralocorticoid receptor target gene and plays a key role in the regulation of the epithelial sodium channel.</title>
        <authorList>
            <person name="Ziera T."/>
            <person name="Irlbacher H."/>
            <person name="Fromm A."/>
            <person name="Latouche C."/>
            <person name="Krug S.M."/>
            <person name="Fromm M."/>
            <person name="Jaisser F."/>
            <person name="Borden S.A."/>
        </authorList>
    </citation>
    <scope>INDUCTION BY ALDOSTERONE</scope>
</reference>
<reference key="8">
    <citation type="journal article" date="2012" name="Exp. Cell Res.">
        <title>CNK3 and IPCEF1 produce a single protein that is required for HGF dependent Arf6 activation and migration.</title>
        <authorList>
            <person name="Attar M.A."/>
            <person name="Salem J.C."/>
            <person name="Pursel H.S."/>
            <person name="Santy L.C."/>
        </authorList>
    </citation>
    <scope>ALTERNATIVE SPLICING</scope>
</reference>
<reference key="9">
    <citation type="journal article" date="2012" name="J. Biol. Chem.">
        <title>Scaffold protein connector enhancer of kinase suppressor of Ras isoform 3 (CNK3) coordinates assembly of a multiprotein epithelial sodium channel (ENaC)-regulatory complex.</title>
        <authorList>
            <person name="Soundararajan R."/>
            <person name="Ziera T."/>
            <person name="Koo E."/>
            <person name="Ling K."/>
            <person name="Wang J."/>
            <person name="Borden S.A."/>
            <person name="Pearce D."/>
        </authorList>
    </citation>
    <scope>FUNCTION</scope>
    <scope>INTERACTION WITH ENAC; NEDDL4; RAF1 AND SGK1</scope>
    <scope>SUBCELLULAR LOCATION</scope>
    <scope>DOMAIN</scope>
</reference>
<reference key="10">
    <citation type="journal article" date="2013" name="J. Proteome Res.">
        <title>Toward a comprehensive characterization of a human cancer cell phosphoproteome.</title>
        <authorList>
            <person name="Zhou H."/>
            <person name="Di Palma S."/>
            <person name="Preisinger C."/>
            <person name="Peng M."/>
            <person name="Polat A.N."/>
            <person name="Heck A.J."/>
            <person name="Mohammed S."/>
        </authorList>
    </citation>
    <scope>PHOSPHORYLATION [LARGE SCALE ANALYSIS] AT SER-383</scope>
    <scope>IDENTIFICATION BY MASS SPECTROMETRY [LARGE SCALE ANALYSIS]</scope>
    <source>
        <tissue>Cervix carcinoma</tissue>
        <tissue>Erythroleukemia</tissue>
    </source>
</reference>
<evidence type="ECO:0000250" key="1">
    <source>
        <dbReference type="UniProtKB" id="Q8BMA3"/>
    </source>
</evidence>
<evidence type="ECO:0000255" key="2">
    <source>
        <dbReference type="PROSITE-ProRule" id="PRU00143"/>
    </source>
</evidence>
<evidence type="ECO:0000255" key="3">
    <source>
        <dbReference type="PROSITE-ProRule" id="PRU00184"/>
    </source>
</evidence>
<evidence type="ECO:0000255" key="4">
    <source>
        <dbReference type="PROSITE-ProRule" id="PRU00621"/>
    </source>
</evidence>
<evidence type="ECO:0000256" key="5">
    <source>
        <dbReference type="SAM" id="MobiDB-lite"/>
    </source>
</evidence>
<evidence type="ECO:0000269" key="6">
    <source>
    </source>
</evidence>
<evidence type="ECO:0000269" key="7">
    <source>
    </source>
</evidence>
<evidence type="ECO:0000305" key="8"/>
<evidence type="ECO:0007744" key="9">
    <source>
    </source>
</evidence>